<name>RIMP_KLEP3</name>
<reference key="1">
    <citation type="journal article" date="2008" name="PLoS Genet.">
        <title>Complete genome sequence of the N2-fixing broad host range endophyte Klebsiella pneumoniae 342 and virulence predictions verified in mice.</title>
        <authorList>
            <person name="Fouts D.E."/>
            <person name="Tyler H.L."/>
            <person name="DeBoy R.T."/>
            <person name="Daugherty S."/>
            <person name="Ren Q."/>
            <person name="Badger J.H."/>
            <person name="Durkin A.S."/>
            <person name="Huot H."/>
            <person name="Shrivastava S."/>
            <person name="Kothari S."/>
            <person name="Dodson R.J."/>
            <person name="Mohamoud Y."/>
            <person name="Khouri H."/>
            <person name="Roesch L.F.W."/>
            <person name="Krogfelt K.A."/>
            <person name="Struve C."/>
            <person name="Triplett E.W."/>
            <person name="Methe B.A."/>
        </authorList>
    </citation>
    <scope>NUCLEOTIDE SEQUENCE [LARGE SCALE GENOMIC DNA]</scope>
    <source>
        <strain>342</strain>
    </source>
</reference>
<sequence>MSTLEQKLTEMLTAPVEALGFELVGIEFIRGRTSTLRIYIDSEDGINVDDCADVSHQVSAVMDVEDPITVAYNLEVSSPGLDRPMFTAEHYQRFTGEEVALVLRMAVQNRRKWQGIIKAVDGEMITVTVEGKDEVFALSNIQKANLVPHF</sequence>
<feature type="chain" id="PRO_0000384687" description="Ribosome maturation factor RimP">
    <location>
        <begin position="1"/>
        <end position="150"/>
    </location>
</feature>
<dbReference type="EMBL" id="CP000964">
    <property type="protein sequence ID" value="ACI08725.1"/>
    <property type="molecule type" value="Genomic_DNA"/>
</dbReference>
<dbReference type="SMR" id="B5XSX2"/>
<dbReference type="KEGG" id="kpe:KPK_0544"/>
<dbReference type="HOGENOM" id="CLU_070525_1_1_6"/>
<dbReference type="Proteomes" id="UP000001734">
    <property type="component" value="Chromosome"/>
</dbReference>
<dbReference type="GO" id="GO:0005829">
    <property type="term" value="C:cytosol"/>
    <property type="evidence" value="ECO:0007669"/>
    <property type="project" value="TreeGrafter"/>
</dbReference>
<dbReference type="GO" id="GO:0000028">
    <property type="term" value="P:ribosomal small subunit assembly"/>
    <property type="evidence" value="ECO:0007669"/>
    <property type="project" value="TreeGrafter"/>
</dbReference>
<dbReference type="GO" id="GO:0006412">
    <property type="term" value="P:translation"/>
    <property type="evidence" value="ECO:0007669"/>
    <property type="project" value="TreeGrafter"/>
</dbReference>
<dbReference type="CDD" id="cd01734">
    <property type="entry name" value="YlxS_C"/>
    <property type="match status" value="1"/>
</dbReference>
<dbReference type="FunFam" id="2.30.30.180:FF:000001">
    <property type="entry name" value="Ribosome maturation factor RimP"/>
    <property type="match status" value="1"/>
</dbReference>
<dbReference type="FunFam" id="3.30.300.70:FF:000001">
    <property type="entry name" value="Ribosome maturation factor RimP"/>
    <property type="match status" value="1"/>
</dbReference>
<dbReference type="Gene3D" id="2.30.30.180">
    <property type="entry name" value="Ribosome maturation factor RimP, C-terminal domain"/>
    <property type="match status" value="1"/>
</dbReference>
<dbReference type="Gene3D" id="3.30.300.70">
    <property type="entry name" value="RimP-like superfamily, N-terminal"/>
    <property type="match status" value="1"/>
</dbReference>
<dbReference type="HAMAP" id="MF_01077">
    <property type="entry name" value="RimP"/>
    <property type="match status" value="1"/>
</dbReference>
<dbReference type="InterPro" id="IPR003728">
    <property type="entry name" value="Ribosome_maturation_RimP"/>
</dbReference>
<dbReference type="InterPro" id="IPR028998">
    <property type="entry name" value="RimP_C"/>
</dbReference>
<dbReference type="InterPro" id="IPR036847">
    <property type="entry name" value="RimP_C_sf"/>
</dbReference>
<dbReference type="InterPro" id="IPR028989">
    <property type="entry name" value="RimP_N"/>
</dbReference>
<dbReference type="InterPro" id="IPR035956">
    <property type="entry name" value="RimP_N_sf"/>
</dbReference>
<dbReference type="NCBIfam" id="NF000927">
    <property type="entry name" value="PRK00092.1-1"/>
    <property type="match status" value="1"/>
</dbReference>
<dbReference type="PANTHER" id="PTHR33867">
    <property type="entry name" value="RIBOSOME MATURATION FACTOR RIMP"/>
    <property type="match status" value="1"/>
</dbReference>
<dbReference type="PANTHER" id="PTHR33867:SF1">
    <property type="entry name" value="RIBOSOME MATURATION FACTOR RIMP"/>
    <property type="match status" value="1"/>
</dbReference>
<dbReference type="Pfam" id="PF17384">
    <property type="entry name" value="DUF150_C"/>
    <property type="match status" value="1"/>
</dbReference>
<dbReference type="Pfam" id="PF02576">
    <property type="entry name" value="RimP_N"/>
    <property type="match status" value="1"/>
</dbReference>
<dbReference type="SUPFAM" id="SSF74942">
    <property type="entry name" value="YhbC-like, C-terminal domain"/>
    <property type="match status" value="1"/>
</dbReference>
<dbReference type="SUPFAM" id="SSF75420">
    <property type="entry name" value="YhbC-like, N-terminal domain"/>
    <property type="match status" value="1"/>
</dbReference>
<comment type="function">
    <text evidence="1">Required for maturation of 30S ribosomal subunits.</text>
</comment>
<comment type="subcellular location">
    <subcellularLocation>
        <location evidence="1">Cytoplasm</location>
    </subcellularLocation>
</comment>
<comment type="similarity">
    <text evidence="1">Belongs to the RimP family.</text>
</comment>
<accession>B5XSX2</accession>
<evidence type="ECO:0000255" key="1">
    <source>
        <dbReference type="HAMAP-Rule" id="MF_01077"/>
    </source>
</evidence>
<keyword id="KW-0963">Cytoplasm</keyword>
<keyword id="KW-0690">Ribosome biogenesis</keyword>
<organism>
    <name type="scientific">Klebsiella pneumoniae (strain 342)</name>
    <dbReference type="NCBI Taxonomy" id="507522"/>
    <lineage>
        <taxon>Bacteria</taxon>
        <taxon>Pseudomonadati</taxon>
        <taxon>Pseudomonadota</taxon>
        <taxon>Gammaproteobacteria</taxon>
        <taxon>Enterobacterales</taxon>
        <taxon>Enterobacteriaceae</taxon>
        <taxon>Klebsiella/Raoultella group</taxon>
        <taxon>Klebsiella</taxon>
        <taxon>Klebsiella pneumoniae complex</taxon>
    </lineage>
</organism>
<protein>
    <recommendedName>
        <fullName evidence="1">Ribosome maturation factor RimP</fullName>
    </recommendedName>
</protein>
<proteinExistence type="inferred from homology"/>
<gene>
    <name evidence="1" type="primary">rimP</name>
    <name type="ordered locus">KPK_0544</name>
</gene>